<gene>
    <name type="primary">metG</name>
    <name type="synonym">metS</name>
    <name type="ordered locus">MYPU_4900</name>
</gene>
<sequence length="509" mass="59892">MKKTIYITTPIYYPSGDLHLGHIYSTNIAWVLRNYKKIQGYETFFSTGSDEHGQKIFNKAQELKLETQDYVDRQANKFIDFWKKANIDYDFFARTTNKEHKEVVREIFHKLKEKNIIYLDKYVGLYSVSDEEFLTETQALKKDNKFFHPVSNHELIKIEEESYFFNLNLFIDWIKEFLDQDIISSKAIVNELKSNFINKGLENLSVTRIKLDWGIKIDQSSKHVIYVWLDALFQYLTNLGYGSKNQSLYEKFWKNGDERVHVVGKEITRFHCIYWPIFLKSLNVKMPTKIISHGWIVTPEGKMSKSKGNVVDPVVLIEKYGSEVLKYFLIAKLSIKKDGVFSEELLVSAYNNDLVNTFSNLISRTVKMILNNYDRPLSFILSKDQEDLEIEKDIKNSFETFCSFAEEYEFDKAFESTINLGKKLNLYIDKTRPWLLTKEDQKLEIVLNRLLNGIYAMAFELSIVMPQTSQKLAKALGFESFEKSKLEDFKKFDNIKIEKIENLFNRIKL</sequence>
<proteinExistence type="inferred from homology"/>
<name>SYM_MYCPU</name>
<protein>
    <recommendedName>
        <fullName>Methionine--tRNA ligase</fullName>
        <ecNumber>6.1.1.10</ecNumber>
    </recommendedName>
    <alternativeName>
        <fullName>Methionyl-tRNA synthetase</fullName>
        <shortName>MetRS</shortName>
    </alternativeName>
</protein>
<keyword id="KW-0030">Aminoacyl-tRNA synthetase</keyword>
<keyword id="KW-0067">ATP-binding</keyword>
<keyword id="KW-0963">Cytoplasm</keyword>
<keyword id="KW-0436">Ligase</keyword>
<keyword id="KW-0547">Nucleotide-binding</keyword>
<keyword id="KW-0648">Protein biosynthesis</keyword>
<keyword id="KW-1185">Reference proteome</keyword>
<reference key="1">
    <citation type="journal article" date="2001" name="Nucleic Acids Res.">
        <title>The complete genome sequence of the murine respiratory pathogen Mycoplasma pulmonis.</title>
        <authorList>
            <person name="Chambaud I."/>
            <person name="Heilig R."/>
            <person name="Ferris S."/>
            <person name="Barbe V."/>
            <person name="Samson D."/>
            <person name="Galisson F."/>
            <person name="Moszer I."/>
            <person name="Dybvig K."/>
            <person name="Wroblewski H."/>
            <person name="Viari A."/>
            <person name="Rocha E.P.C."/>
            <person name="Blanchard A."/>
        </authorList>
    </citation>
    <scope>NUCLEOTIDE SEQUENCE [LARGE SCALE GENOMIC DNA]</scope>
    <source>
        <strain>UAB CTIP</strain>
    </source>
</reference>
<reference key="2">
    <citation type="journal article" date="1996" name="J. Bacteriol.">
        <title>Characterization of the ftsZ gene from Mycoplasma pulmonis, an organism lacking a cell wall.</title>
        <authorList>
            <person name="Wang X."/>
            <person name="Lutkenhaus J."/>
        </authorList>
    </citation>
    <scope>NUCLEOTIDE SEQUENCE [GENOMIC DNA] OF 1-281</scope>
    <source>
        <strain>KD735-16</strain>
    </source>
</reference>
<comment type="function">
    <text evidence="1">Is required not only for elongation of protein synthesis but also for the initiation of all mRNA translation through initiator tRNA(fMet) aminoacylation.</text>
</comment>
<comment type="catalytic activity">
    <reaction>
        <text>tRNA(Met) + L-methionine + ATP = L-methionyl-tRNA(Met) + AMP + diphosphate</text>
        <dbReference type="Rhea" id="RHEA:13481"/>
        <dbReference type="Rhea" id="RHEA-COMP:9667"/>
        <dbReference type="Rhea" id="RHEA-COMP:9698"/>
        <dbReference type="ChEBI" id="CHEBI:30616"/>
        <dbReference type="ChEBI" id="CHEBI:33019"/>
        <dbReference type="ChEBI" id="CHEBI:57844"/>
        <dbReference type="ChEBI" id="CHEBI:78442"/>
        <dbReference type="ChEBI" id="CHEBI:78530"/>
        <dbReference type="ChEBI" id="CHEBI:456215"/>
        <dbReference type="EC" id="6.1.1.10"/>
    </reaction>
</comment>
<comment type="subunit">
    <text evidence="1">Monomer.</text>
</comment>
<comment type="subcellular location">
    <subcellularLocation>
        <location evidence="1">Cytoplasm</location>
    </subcellularLocation>
</comment>
<comment type="similarity">
    <text evidence="2">Belongs to the class-I aminoacyl-tRNA synthetase family. MetG type 2B subfamily.</text>
</comment>
<feature type="chain" id="PRO_0000139230" description="Methionine--tRNA ligase">
    <location>
        <begin position="1"/>
        <end position="509"/>
    </location>
</feature>
<feature type="short sequence motif" description="'HIGH' region">
    <location>
        <begin position="12"/>
        <end position="22"/>
    </location>
</feature>
<feature type="short sequence motif" description="'KMSKS' region">
    <location>
        <begin position="302"/>
        <end position="306"/>
    </location>
</feature>
<feature type="binding site" evidence="1">
    <location>
        <position position="305"/>
    </location>
    <ligand>
        <name>ATP</name>
        <dbReference type="ChEBI" id="CHEBI:30616"/>
    </ligand>
</feature>
<feature type="sequence conflict" description="In Ref. 2; AAC44094." evidence="2" ref="2">
    <original>I</original>
    <variation>M</variation>
    <location>
        <position position="215"/>
    </location>
</feature>
<organism>
    <name type="scientific">Mycoplasmopsis pulmonis (strain UAB CTIP)</name>
    <name type="common">Mycoplasma pulmonis</name>
    <dbReference type="NCBI Taxonomy" id="272635"/>
    <lineage>
        <taxon>Bacteria</taxon>
        <taxon>Bacillati</taxon>
        <taxon>Mycoplasmatota</taxon>
        <taxon>Mycoplasmoidales</taxon>
        <taxon>Metamycoplasmataceae</taxon>
        <taxon>Mycoplasmopsis</taxon>
    </lineage>
</organism>
<dbReference type="EC" id="6.1.1.10"/>
<dbReference type="EMBL" id="AL445564">
    <property type="protein sequence ID" value="CAC13663.1"/>
    <property type="molecule type" value="Genomic_DNA"/>
</dbReference>
<dbReference type="EMBL" id="U34931">
    <property type="protein sequence ID" value="AAC44094.1"/>
    <property type="molecule type" value="Genomic_DNA"/>
</dbReference>
<dbReference type="PIR" id="B90573">
    <property type="entry name" value="B90573"/>
</dbReference>
<dbReference type="PIR" id="PC6005">
    <property type="entry name" value="PC6005"/>
</dbReference>
<dbReference type="RefSeq" id="WP_010925291.1">
    <property type="nucleotide sequence ID" value="NC_002771.1"/>
</dbReference>
<dbReference type="SMR" id="Q50319"/>
<dbReference type="STRING" id="272635.gene:17577091"/>
<dbReference type="KEGG" id="mpu:MYPU_4900"/>
<dbReference type="eggNOG" id="COG0143">
    <property type="taxonomic scope" value="Bacteria"/>
</dbReference>
<dbReference type="HOGENOM" id="CLU_009710_9_4_14"/>
<dbReference type="BioCyc" id="MPUL272635:G1GT6-494-MONOMER"/>
<dbReference type="Proteomes" id="UP000000528">
    <property type="component" value="Chromosome"/>
</dbReference>
<dbReference type="GO" id="GO:0005737">
    <property type="term" value="C:cytoplasm"/>
    <property type="evidence" value="ECO:0007669"/>
    <property type="project" value="UniProtKB-SubCell"/>
</dbReference>
<dbReference type="GO" id="GO:0005524">
    <property type="term" value="F:ATP binding"/>
    <property type="evidence" value="ECO:0007669"/>
    <property type="project" value="UniProtKB-UniRule"/>
</dbReference>
<dbReference type="GO" id="GO:0004825">
    <property type="term" value="F:methionine-tRNA ligase activity"/>
    <property type="evidence" value="ECO:0007669"/>
    <property type="project" value="UniProtKB-UniRule"/>
</dbReference>
<dbReference type="GO" id="GO:0006431">
    <property type="term" value="P:methionyl-tRNA aminoacylation"/>
    <property type="evidence" value="ECO:0007669"/>
    <property type="project" value="UniProtKB-UniRule"/>
</dbReference>
<dbReference type="CDD" id="cd07957">
    <property type="entry name" value="Anticodon_Ia_Met"/>
    <property type="match status" value="1"/>
</dbReference>
<dbReference type="CDD" id="cd00814">
    <property type="entry name" value="MetRS_core"/>
    <property type="match status" value="1"/>
</dbReference>
<dbReference type="Gene3D" id="2.170.220.10">
    <property type="match status" value="1"/>
</dbReference>
<dbReference type="Gene3D" id="3.40.50.620">
    <property type="entry name" value="HUPs"/>
    <property type="match status" value="1"/>
</dbReference>
<dbReference type="Gene3D" id="1.10.730.10">
    <property type="entry name" value="Isoleucyl-tRNA Synthetase, Domain 1"/>
    <property type="match status" value="1"/>
</dbReference>
<dbReference type="HAMAP" id="MF_01228">
    <property type="entry name" value="Met_tRNA_synth_type2"/>
    <property type="match status" value="1"/>
</dbReference>
<dbReference type="InterPro" id="IPR001412">
    <property type="entry name" value="aa-tRNA-synth_I_CS"/>
</dbReference>
<dbReference type="InterPro" id="IPR041872">
    <property type="entry name" value="Anticodon_Met"/>
</dbReference>
<dbReference type="InterPro" id="IPR014758">
    <property type="entry name" value="Met-tRNA_synth"/>
</dbReference>
<dbReference type="InterPro" id="IPR023457">
    <property type="entry name" value="Met-tRNA_synth_2"/>
</dbReference>
<dbReference type="InterPro" id="IPR015413">
    <property type="entry name" value="Methionyl/Leucyl_tRNA_Synth"/>
</dbReference>
<dbReference type="InterPro" id="IPR033911">
    <property type="entry name" value="MetRS_core"/>
</dbReference>
<dbReference type="InterPro" id="IPR014729">
    <property type="entry name" value="Rossmann-like_a/b/a_fold"/>
</dbReference>
<dbReference type="InterPro" id="IPR009080">
    <property type="entry name" value="tRNAsynth_Ia_anticodon-bd"/>
</dbReference>
<dbReference type="NCBIfam" id="TIGR00398">
    <property type="entry name" value="metG"/>
    <property type="match status" value="1"/>
</dbReference>
<dbReference type="PANTHER" id="PTHR43326:SF1">
    <property type="entry name" value="METHIONINE--TRNA LIGASE, MITOCHONDRIAL"/>
    <property type="match status" value="1"/>
</dbReference>
<dbReference type="PANTHER" id="PTHR43326">
    <property type="entry name" value="METHIONYL-TRNA SYNTHETASE"/>
    <property type="match status" value="1"/>
</dbReference>
<dbReference type="Pfam" id="PF09334">
    <property type="entry name" value="tRNA-synt_1g"/>
    <property type="match status" value="2"/>
</dbReference>
<dbReference type="PRINTS" id="PR01041">
    <property type="entry name" value="TRNASYNTHMET"/>
</dbReference>
<dbReference type="SUPFAM" id="SSF47323">
    <property type="entry name" value="Anticodon-binding domain of a subclass of class I aminoacyl-tRNA synthetases"/>
    <property type="match status" value="1"/>
</dbReference>
<dbReference type="SUPFAM" id="SSF52374">
    <property type="entry name" value="Nucleotidylyl transferase"/>
    <property type="match status" value="1"/>
</dbReference>
<dbReference type="PROSITE" id="PS00178">
    <property type="entry name" value="AA_TRNA_LIGASE_I"/>
    <property type="match status" value="1"/>
</dbReference>
<accession>Q50319</accession>
<evidence type="ECO:0000250" key="1"/>
<evidence type="ECO:0000305" key="2"/>